<accession>Q1AVZ3</accession>
<proteinExistence type="inferred from homology"/>
<feature type="chain" id="PRO_0000266391" description="Guanylate kinase">
    <location>
        <begin position="1"/>
        <end position="191"/>
    </location>
</feature>
<feature type="domain" description="Guanylate kinase-like" evidence="1">
    <location>
        <begin position="4"/>
        <end position="182"/>
    </location>
</feature>
<feature type="binding site" evidence="1">
    <location>
        <begin position="11"/>
        <end position="18"/>
    </location>
    <ligand>
        <name>ATP</name>
        <dbReference type="ChEBI" id="CHEBI:30616"/>
    </ligand>
</feature>
<protein>
    <recommendedName>
        <fullName evidence="1">Guanylate kinase</fullName>
        <ecNumber evidence="1">2.7.4.8</ecNumber>
    </recommendedName>
    <alternativeName>
        <fullName evidence="1">GMP kinase</fullName>
    </alternativeName>
</protein>
<name>KGUA_RUBXD</name>
<keyword id="KW-0067">ATP-binding</keyword>
<keyword id="KW-0963">Cytoplasm</keyword>
<keyword id="KW-0418">Kinase</keyword>
<keyword id="KW-0547">Nucleotide-binding</keyword>
<keyword id="KW-1185">Reference proteome</keyword>
<keyword id="KW-0808">Transferase</keyword>
<organism>
    <name type="scientific">Rubrobacter xylanophilus (strain DSM 9941 / JCM 11954 / NBRC 16129 / PRD-1)</name>
    <dbReference type="NCBI Taxonomy" id="266117"/>
    <lineage>
        <taxon>Bacteria</taxon>
        <taxon>Bacillati</taxon>
        <taxon>Actinomycetota</taxon>
        <taxon>Rubrobacteria</taxon>
        <taxon>Rubrobacterales</taxon>
        <taxon>Rubrobacteraceae</taxon>
        <taxon>Rubrobacter</taxon>
    </lineage>
</organism>
<reference key="1">
    <citation type="submission" date="2006-06" db="EMBL/GenBank/DDBJ databases">
        <title>Complete sequence of Rubrobacter xylanophilus DSM 9941.</title>
        <authorList>
            <consortium name="US DOE Joint Genome Institute"/>
            <person name="Copeland A."/>
            <person name="Lucas S."/>
            <person name="Lapidus A."/>
            <person name="Barry K."/>
            <person name="Detter J.C."/>
            <person name="Glavina del Rio T."/>
            <person name="Hammon N."/>
            <person name="Israni S."/>
            <person name="Dalin E."/>
            <person name="Tice H."/>
            <person name="Pitluck S."/>
            <person name="Munk A.C."/>
            <person name="Brettin T."/>
            <person name="Bruce D."/>
            <person name="Han C."/>
            <person name="Tapia R."/>
            <person name="Gilna P."/>
            <person name="Schmutz J."/>
            <person name="Larimer F."/>
            <person name="Land M."/>
            <person name="Hauser L."/>
            <person name="Kyrpides N."/>
            <person name="Lykidis A."/>
            <person name="da Costa M.S."/>
            <person name="Rainey F.A."/>
            <person name="Empadinhas N."/>
            <person name="Jolivet E."/>
            <person name="Battista J.R."/>
            <person name="Richardson P."/>
        </authorList>
    </citation>
    <scope>NUCLEOTIDE SEQUENCE [LARGE SCALE GENOMIC DNA]</scope>
    <source>
        <strain>DSM 9941 / JCM 11954 / NBRC 16129 / PRD-1</strain>
    </source>
</reference>
<evidence type="ECO:0000255" key="1">
    <source>
        <dbReference type="HAMAP-Rule" id="MF_00328"/>
    </source>
</evidence>
<gene>
    <name evidence="1" type="primary">gmk</name>
    <name type="ordered locus">Rxyl_1473</name>
</gene>
<comment type="function">
    <text evidence="1">Essential for recycling GMP and indirectly, cGMP.</text>
</comment>
<comment type="catalytic activity">
    <reaction evidence="1">
        <text>GMP + ATP = GDP + ADP</text>
        <dbReference type="Rhea" id="RHEA:20780"/>
        <dbReference type="ChEBI" id="CHEBI:30616"/>
        <dbReference type="ChEBI" id="CHEBI:58115"/>
        <dbReference type="ChEBI" id="CHEBI:58189"/>
        <dbReference type="ChEBI" id="CHEBI:456216"/>
        <dbReference type="EC" id="2.7.4.8"/>
    </reaction>
</comment>
<comment type="subcellular location">
    <subcellularLocation>
        <location evidence="1">Cytoplasm</location>
    </subcellularLocation>
</comment>
<comment type="similarity">
    <text evidence="1">Belongs to the guanylate kinase family.</text>
</comment>
<dbReference type="EC" id="2.7.4.8" evidence="1"/>
<dbReference type="EMBL" id="CP000386">
    <property type="protein sequence ID" value="ABG04435.1"/>
    <property type="molecule type" value="Genomic_DNA"/>
</dbReference>
<dbReference type="RefSeq" id="WP_011564452.1">
    <property type="nucleotide sequence ID" value="NC_008148.1"/>
</dbReference>
<dbReference type="SMR" id="Q1AVZ3"/>
<dbReference type="STRING" id="266117.Rxyl_1473"/>
<dbReference type="KEGG" id="rxy:Rxyl_1473"/>
<dbReference type="eggNOG" id="COG0194">
    <property type="taxonomic scope" value="Bacteria"/>
</dbReference>
<dbReference type="HOGENOM" id="CLU_001715_1_2_11"/>
<dbReference type="OrthoDB" id="9808150at2"/>
<dbReference type="PhylomeDB" id="Q1AVZ3"/>
<dbReference type="Proteomes" id="UP000006637">
    <property type="component" value="Chromosome"/>
</dbReference>
<dbReference type="GO" id="GO:0005829">
    <property type="term" value="C:cytosol"/>
    <property type="evidence" value="ECO:0007669"/>
    <property type="project" value="TreeGrafter"/>
</dbReference>
<dbReference type="GO" id="GO:0005524">
    <property type="term" value="F:ATP binding"/>
    <property type="evidence" value="ECO:0007669"/>
    <property type="project" value="UniProtKB-UniRule"/>
</dbReference>
<dbReference type="GO" id="GO:0004385">
    <property type="term" value="F:guanylate kinase activity"/>
    <property type="evidence" value="ECO:0007669"/>
    <property type="project" value="UniProtKB-UniRule"/>
</dbReference>
<dbReference type="CDD" id="cd00071">
    <property type="entry name" value="GMPK"/>
    <property type="match status" value="1"/>
</dbReference>
<dbReference type="FunFam" id="3.30.63.10:FF:000002">
    <property type="entry name" value="Guanylate kinase 1"/>
    <property type="match status" value="1"/>
</dbReference>
<dbReference type="Gene3D" id="3.30.63.10">
    <property type="entry name" value="Guanylate Kinase phosphate binding domain"/>
    <property type="match status" value="1"/>
</dbReference>
<dbReference type="Gene3D" id="3.40.50.300">
    <property type="entry name" value="P-loop containing nucleotide triphosphate hydrolases"/>
    <property type="match status" value="1"/>
</dbReference>
<dbReference type="HAMAP" id="MF_00328">
    <property type="entry name" value="Guanylate_kinase"/>
    <property type="match status" value="1"/>
</dbReference>
<dbReference type="InterPro" id="IPR008145">
    <property type="entry name" value="GK/Ca_channel_bsu"/>
</dbReference>
<dbReference type="InterPro" id="IPR008144">
    <property type="entry name" value="Guanylate_kin-like_dom"/>
</dbReference>
<dbReference type="InterPro" id="IPR017665">
    <property type="entry name" value="Guanylate_kinase"/>
</dbReference>
<dbReference type="InterPro" id="IPR020590">
    <property type="entry name" value="Guanylate_kinase_CS"/>
</dbReference>
<dbReference type="InterPro" id="IPR027417">
    <property type="entry name" value="P-loop_NTPase"/>
</dbReference>
<dbReference type="NCBIfam" id="TIGR03263">
    <property type="entry name" value="guanyl_kin"/>
    <property type="match status" value="1"/>
</dbReference>
<dbReference type="PANTHER" id="PTHR23117:SF13">
    <property type="entry name" value="GUANYLATE KINASE"/>
    <property type="match status" value="1"/>
</dbReference>
<dbReference type="PANTHER" id="PTHR23117">
    <property type="entry name" value="GUANYLATE KINASE-RELATED"/>
    <property type="match status" value="1"/>
</dbReference>
<dbReference type="Pfam" id="PF00625">
    <property type="entry name" value="Guanylate_kin"/>
    <property type="match status" value="1"/>
</dbReference>
<dbReference type="SMART" id="SM00072">
    <property type="entry name" value="GuKc"/>
    <property type="match status" value="1"/>
</dbReference>
<dbReference type="SUPFAM" id="SSF52540">
    <property type="entry name" value="P-loop containing nucleoside triphosphate hydrolases"/>
    <property type="match status" value="1"/>
</dbReference>
<dbReference type="PROSITE" id="PS00856">
    <property type="entry name" value="GUANYLATE_KINASE_1"/>
    <property type="match status" value="1"/>
</dbReference>
<dbReference type="PROSITE" id="PS50052">
    <property type="entry name" value="GUANYLATE_KINASE_2"/>
    <property type="match status" value="1"/>
</dbReference>
<sequence>MRRGRLIVVSGPSGAGKSTLIRAALDAVPQLAYSVSATTRAPRPGEVNGRDYIFLSREEFERWIREGRFLEWAEYSGNLYGTPAHRVEEYLESGLSVILEIELQGARKVRRKRPDAVMIFVRAPSLEETRRRLEGRATESEDAVQRRLATAVEEVAARDEFDCEVVNDDYERAREEMIEIMRRIVAGGDPC</sequence>